<keyword id="KW-1185">Reference proteome</keyword>
<name>Y904_TREPA</name>
<gene>
    <name type="ordered locus">TP_0904</name>
</gene>
<dbReference type="EMBL" id="AE000520">
    <property type="protein sequence ID" value="AAC65869.1"/>
    <property type="molecule type" value="Genomic_DNA"/>
</dbReference>
<dbReference type="PIR" id="E71267">
    <property type="entry name" value="E71267"/>
</dbReference>
<dbReference type="RefSeq" id="WP_010882347.1">
    <property type="nucleotide sequence ID" value="NC_021490.2"/>
</dbReference>
<dbReference type="STRING" id="243276.TP_0904"/>
<dbReference type="EnsemblBacteria" id="AAC65869">
    <property type="protein sequence ID" value="AAC65869"/>
    <property type="gene ID" value="TP_0904"/>
</dbReference>
<dbReference type="KEGG" id="tpa:TP_0904"/>
<dbReference type="KEGG" id="tpw:TPANIC_0904"/>
<dbReference type="HOGENOM" id="CLU_2541589_0_0_12"/>
<dbReference type="Proteomes" id="UP000000811">
    <property type="component" value="Chromosome"/>
</dbReference>
<proteinExistence type="predicted"/>
<protein>
    <recommendedName>
        <fullName>Uncharacterized protein TP_0904</fullName>
    </recommendedName>
</protein>
<accession>O83874</accession>
<reference key="1">
    <citation type="journal article" date="1998" name="Science">
        <title>Complete genome sequence of Treponema pallidum, the syphilis spirochete.</title>
        <authorList>
            <person name="Fraser C.M."/>
            <person name="Norris S.J."/>
            <person name="Weinstock G.M."/>
            <person name="White O."/>
            <person name="Sutton G.G."/>
            <person name="Dodson R.J."/>
            <person name="Gwinn M.L."/>
            <person name="Hickey E.K."/>
            <person name="Clayton R.A."/>
            <person name="Ketchum K.A."/>
            <person name="Sodergren E."/>
            <person name="Hardham J.M."/>
            <person name="McLeod M.P."/>
            <person name="Salzberg S.L."/>
            <person name="Peterson J.D."/>
            <person name="Khalak H.G."/>
            <person name="Richardson D.L."/>
            <person name="Howell J.K."/>
            <person name="Chidambaram M."/>
            <person name="Utterback T.R."/>
            <person name="McDonald L.A."/>
            <person name="Artiach P."/>
            <person name="Bowman C."/>
            <person name="Cotton M.D."/>
            <person name="Fujii C."/>
            <person name="Garland S.A."/>
            <person name="Hatch B."/>
            <person name="Horst K."/>
            <person name="Roberts K.M."/>
            <person name="Sandusky M."/>
            <person name="Weidman J.F."/>
            <person name="Smith H.O."/>
            <person name="Venter J.C."/>
        </authorList>
    </citation>
    <scope>NUCLEOTIDE SEQUENCE [LARGE SCALE GENOMIC DNA]</scope>
    <source>
        <strain>Nichols</strain>
    </source>
</reference>
<organism>
    <name type="scientific">Treponema pallidum (strain Nichols)</name>
    <dbReference type="NCBI Taxonomy" id="243276"/>
    <lineage>
        <taxon>Bacteria</taxon>
        <taxon>Pseudomonadati</taxon>
        <taxon>Spirochaetota</taxon>
        <taxon>Spirochaetia</taxon>
        <taxon>Spirochaetales</taxon>
        <taxon>Treponemataceae</taxon>
        <taxon>Treponema</taxon>
    </lineage>
</organism>
<sequence length="83" mass="9659">MNKNTQDKGTPAALQVFLLPQYNRYSAEMTRHVPLLCNLFSMSRYVLRHLTAQIILERMSAACVCLRRRRQSEFTDPTEKIGE</sequence>
<feature type="chain" id="PRO_0000202348" description="Uncharacterized protein TP_0904">
    <location>
        <begin position="1"/>
        <end position="83"/>
    </location>
</feature>